<gene>
    <name type="primary">purM</name>
    <name type="ordered locus">SE_0769</name>
</gene>
<name>PUR5_STAES</name>
<dbReference type="EC" id="6.3.3.1"/>
<dbReference type="EMBL" id="AE015929">
    <property type="protein sequence ID" value="AAO04366.1"/>
    <property type="molecule type" value="Genomic_DNA"/>
</dbReference>
<dbReference type="RefSeq" id="NP_764324.1">
    <property type="nucleotide sequence ID" value="NC_004461.1"/>
</dbReference>
<dbReference type="RefSeq" id="WP_001831685.1">
    <property type="nucleotide sequence ID" value="NZ_WBME01000028.1"/>
</dbReference>
<dbReference type="SMR" id="Q8CT29"/>
<dbReference type="GeneID" id="50019091"/>
<dbReference type="KEGG" id="sep:SE_0769"/>
<dbReference type="PATRIC" id="fig|176280.10.peg.741"/>
<dbReference type="eggNOG" id="COG0150">
    <property type="taxonomic scope" value="Bacteria"/>
</dbReference>
<dbReference type="HOGENOM" id="CLU_047116_0_0_9"/>
<dbReference type="OrthoDB" id="9802507at2"/>
<dbReference type="UniPathway" id="UPA00074">
    <property type="reaction ID" value="UER00129"/>
</dbReference>
<dbReference type="Proteomes" id="UP000001411">
    <property type="component" value="Chromosome"/>
</dbReference>
<dbReference type="GO" id="GO:0005829">
    <property type="term" value="C:cytosol"/>
    <property type="evidence" value="ECO:0007669"/>
    <property type="project" value="TreeGrafter"/>
</dbReference>
<dbReference type="GO" id="GO:0005524">
    <property type="term" value="F:ATP binding"/>
    <property type="evidence" value="ECO:0007669"/>
    <property type="project" value="UniProtKB-KW"/>
</dbReference>
<dbReference type="GO" id="GO:0004637">
    <property type="term" value="F:phosphoribosylamine-glycine ligase activity"/>
    <property type="evidence" value="ECO:0007669"/>
    <property type="project" value="TreeGrafter"/>
</dbReference>
<dbReference type="GO" id="GO:0004641">
    <property type="term" value="F:phosphoribosylformylglycinamidine cyclo-ligase activity"/>
    <property type="evidence" value="ECO:0007669"/>
    <property type="project" value="UniProtKB-UniRule"/>
</dbReference>
<dbReference type="GO" id="GO:0006189">
    <property type="term" value="P:'de novo' IMP biosynthetic process"/>
    <property type="evidence" value="ECO:0007669"/>
    <property type="project" value="UniProtKB-UniRule"/>
</dbReference>
<dbReference type="GO" id="GO:0046084">
    <property type="term" value="P:adenine biosynthetic process"/>
    <property type="evidence" value="ECO:0007669"/>
    <property type="project" value="TreeGrafter"/>
</dbReference>
<dbReference type="CDD" id="cd02196">
    <property type="entry name" value="PurM"/>
    <property type="match status" value="1"/>
</dbReference>
<dbReference type="FunFam" id="3.30.1330.10:FF:000001">
    <property type="entry name" value="Phosphoribosylformylglycinamidine cyclo-ligase"/>
    <property type="match status" value="1"/>
</dbReference>
<dbReference type="FunFam" id="3.90.650.10:FF:000001">
    <property type="entry name" value="Phosphoribosylformylglycinamidine cyclo-ligase"/>
    <property type="match status" value="1"/>
</dbReference>
<dbReference type="Gene3D" id="3.90.650.10">
    <property type="entry name" value="PurM-like C-terminal domain"/>
    <property type="match status" value="1"/>
</dbReference>
<dbReference type="Gene3D" id="3.30.1330.10">
    <property type="entry name" value="PurM-like, N-terminal domain"/>
    <property type="match status" value="1"/>
</dbReference>
<dbReference type="HAMAP" id="MF_00741">
    <property type="entry name" value="AIRS"/>
    <property type="match status" value="1"/>
</dbReference>
<dbReference type="InterPro" id="IPR010918">
    <property type="entry name" value="PurM-like_C_dom"/>
</dbReference>
<dbReference type="InterPro" id="IPR036676">
    <property type="entry name" value="PurM-like_C_sf"/>
</dbReference>
<dbReference type="InterPro" id="IPR016188">
    <property type="entry name" value="PurM-like_N"/>
</dbReference>
<dbReference type="InterPro" id="IPR036921">
    <property type="entry name" value="PurM-like_N_sf"/>
</dbReference>
<dbReference type="InterPro" id="IPR004733">
    <property type="entry name" value="PurM_cligase"/>
</dbReference>
<dbReference type="NCBIfam" id="TIGR00878">
    <property type="entry name" value="purM"/>
    <property type="match status" value="1"/>
</dbReference>
<dbReference type="PANTHER" id="PTHR10520:SF12">
    <property type="entry name" value="TRIFUNCTIONAL PURINE BIOSYNTHETIC PROTEIN ADENOSINE-3"/>
    <property type="match status" value="1"/>
</dbReference>
<dbReference type="PANTHER" id="PTHR10520">
    <property type="entry name" value="TRIFUNCTIONAL PURINE BIOSYNTHETIC PROTEIN ADENOSINE-3-RELATED"/>
    <property type="match status" value="1"/>
</dbReference>
<dbReference type="Pfam" id="PF00586">
    <property type="entry name" value="AIRS"/>
    <property type="match status" value="1"/>
</dbReference>
<dbReference type="Pfam" id="PF02769">
    <property type="entry name" value="AIRS_C"/>
    <property type="match status" value="1"/>
</dbReference>
<dbReference type="SUPFAM" id="SSF56042">
    <property type="entry name" value="PurM C-terminal domain-like"/>
    <property type="match status" value="1"/>
</dbReference>
<dbReference type="SUPFAM" id="SSF55326">
    <property type="entry name" value="PurM N-terminal domain-like"/>
    <property type="match status" value="1"/>
</dbReference>
<protein>
    <recommendedName>
        <fullName>Phosphoribosylformylglycinamidine cyclo-ligase</fullName>
        <ecNumber>6.3.3.1</ecNumber>
    </recommendedName>
    <alternativeName>
        <fullName>AIR synthase</fullName>
    </alternativeName>
    <alternativeName>
        <fullName>AIRS</fullName>
    </alternativeName>
    <alternativeName>
        <fullName>Phosphoribosyl-aminoimidazole synthetase</fullName>
    </alternativeName>
</protein>
<reference key="1">
    <citation type="journal article" date="2003" name="Mol. Microbiol.">
        <title>Genome-based analysis of virulence genes in a non-biofilm-forming Staphylococcus epidermidis strain (ATCC 12228).</title>
        <authorList>
            <person name="Zhang Y.-Q."/>
            <person name="Ren S.-X."/>
            <person name="Li H.-L."/>
            <person name="Wang Y.-X."/>
            <person name="Fu G."/>
            <person name="Yang J."/>
            <person name="Qin Z.-Q."/>
            <person name="Miao Y.-G."/>
            <person name="Wang W.-Y."/>
            <person name="Chen R.-S."/>
            <person name="Shen Y."/>
            <person name="Chen Z."/>
            <person name="Yuan Z.-H."/>
            <person name="Zhao G.-P."/>
            <person name="Qu D."/>
            <person name="Danchin A."/>
            <person name="Wen Y.-M."/>
        </authorList>
    </citation>
    <scope>NUCLEOTIDE SEQUENCE [LARGE SCALE GENOMIC DNA]</scope>
    <source>
        <strain>ATCC 12228 / FDA PCI 1200</strain>
    </source>
</reference>
<evidence type="ECO:0000250" key="1"/>
<evidence type="ECO:0000305" key="2"/>
<sequence>MSKAYEESGVNIQAGYEAVERITSHVERTLRKEVLGGLGGFGATFDLSQLKMKAPVLVSGTDGVGTKLKLAIDYGKHDTIGIDAVAMCVNDILTTGAEPLYFLDYIATNKVVPSTIEQIVKGISDGCEQTNTALIGGETAEMGEMYHEGEYDIAGFAVGAVEKEDYIDGSNVEEGQAIIGLASSGIHSNGYSLVRKMIKESGVQLHDQFNGQTFLETFLAPTKLYVKPILELKKHIDIKAMSHITGGGFYENIPRALPKGLSAKIDTQSFPTLEVFNWLQKQGNISTNEMYNIFNMGIGYTIIVDKKDVQTTLTTLRAMDTTAYEIGEIIKDDDTPIHLLEVE</sequence>
<feature type="chain" id="PRO_0000148251" description="Phosphoribosylformylglycinamidine cyclo-ligase">
    <location>
        <begin position="1"/>
        <end position="343"/>
    </location>
</feature>
<accession>Q8CT29</accession>
<organism>
    <name type="scientific">Staphylococcus epidermidis (strain ATCC 12228 / FDA PCI 1200)</name>
    <dbReference type="NCBI Taxonomy" id="176280"/>
    <lineage>
        <taxon>Bacteria</taxon>
        <taxon>Bacillati</taxon>
        <taxon>Bacillota</taxon>
        <taxon>Bacilli</taxon>
        <taxon>Bacillales</taxon>
        <taxon>Staphylococcaceae</taxon>
        <taxon>Staphylococcus</taxon>
    </lineage>
</organism>
<keyword id="KW-0067">ATP-binding</keyword>
<keyword id="KW-0963">Cytoplasm</keyword>
<keyword id="KW-0436">Ligase</keyword>
<keyword id="KW-0547">Nucleotide-binding</keyword>
<comment type="catalytic activity">
    <reaction>
        <text>2-formamido-N(1)-(5-O-phospho-beta-D-ribosyl)acetamidine + ATP = 5-amino-1-(5-phospho-beta-D-ribosyl)imidazole + ADP + phosphate + H(+)</text>
        <dbReference type="Rhea" id="RHEA:23032"/>
        <dbReference type="ChEBI" id="CHEBI:15378"/>
        <dbReference type="ChEBI" id="CHEBI:30616"/>
        <dbReference type="ChEBI" id="CHEBI:43474"/>
        <dbReference type="ChEBI" id="CHEBI:137981"/>
        <dbReference type="ChEBI" id="CHEBI:147287"/>
        <dbReference type="ChEBI" id="CHEBI:456216"/>
        <dbReference type="EC" id="6.3.3.1"/>
    </reaction>
</comment>
<comment type="pathway">
    <text>Purine metabolism; IMP biosynthesis via de novo pathway; 5-amino-1-(5-phospho-D-ribosyl)imidazole from N(2)-formyl-N(1)-(5-phospho-D-ribosyl)glycinamide: step 2/2.</text>
</comment>
<comment type="subcellular location">
    <subcellularLocation>
        <location evidence="1">Cytoplasm</location>
    </subcellularLocation>
</comment>
<comment type="similarity">
    <text evidence="2">Belongs to the AIR synthase family.</text>
</comment>
<proteinExistence type="inferred from homology"/>